<evidence type="ECO:0000269" key="1">
    <source>
    </source>
</evidence>
<evidence type="ECO:0000269" key="2">
    <source>
    </source>
</evidence>
<evidence type="ECO:0000269" key="3">
    <source>
    </source>
</evidence>
<evidence type="ECO:0000269" key="4">
    <source>
    </source>
</evidence>
<evidence type="ECO:0000269" key="5">
    <source>
    </source>
</evidence>
<evidence type="ECO:0000269" key="6">
    <source>
    </source>
</evidence>
<evidence type="ECO:0000269" key="7">
    <source>
    </source>
</evidence>
<evidence type="ECO:0000303" key="8">
    <source>
    </source>
</evidence>
<evidence type="ECO:0000303" key="9">
    <source ref="3"/>
</evidence>
<evidence type="ECO:0000305" key="10"/>
<evidence type="ECO:0007829" key="11">
    <source>
        <dbReference type="PDB" id="1TR4"/>
    </source>
</evidence>
<evidence type="ECO:0007829" key="12">
    <source>
        <dbReference type="PDB" id="1UOH"/>
    </source>
</evidence>
<evidence type="ECO:0007829" key="13">
    <source>
        <dbReference type="PDB" id="7VO6"/>
    </source>
</evidence>
<feature type="chain" id="PRO_0000067045" description="26S proteasome non-ATPase regulatory subunit 10">
    <location>
        <begin position="1"/>
        <end position="226"/>
    </location>
</feature>
<feature type="repeat" description="ANK 1">
    <location>
        <begin position="3"/>
        <end position="36"/>
    </location>
</feature>
<feature type="repeat" description="ANK 2">
    <location>
        <begin position="37"/>
        <end position="69"/>
    </location>
</feature>
<feature type="repeat" description="ANK 3">
    <location>
        <begin position="70"/>
        <end position="102"/>
    </location>
</feature>
<feature type="repeat" description="ANK 4">
    <location>
        <begin position="103"/>
        <end position="135"/>
    </location>
</feature>
<feature type="repeat" description="ANK 5">
    <location>
        <begin position="136"/>
        <end position="168"/>
    </location>
</feature>
<feature type="repeat" description="ANK 6">
    <location>
        <begin position="169"/>
        <end position="201"/>
    </location>
</feature>
<feature type="repeat" description="ANK 7">
    <location>
        <begin position="202"/>
        <end position="226"/>
    </location>
</feature>
<feature type="region of interest" description="Interaction with RB1" evidence="1">
    <location>
        <begin position="1"/>
        <end position="71"/>
    </location>
</feature>
<feature type="region of interest" description="Required for nuclear localization">
    <location>
        <begin position="1"/>
        <end position="37"/>
    </location>
</feature>
<feature type="region of interest" description="Interaction with RELA">
    <location>
        <begin position="39"/>
        <end position="226"/>
    </location>
</feature>
<feature type="region of interest" description="Interaction with RB1" evidence="1">
    <location>
        <begin position="171"/>
        <end position="226"/>
    </location>
</feature>
<feature type="splice variant" id="VSP_043043" description="In isoform 2." evidence="8 9">
    <original>GNLKMIHILLYYKASTNIQDTEGNTPLHLACDEERVEEAKLLVSQGASIYIENKEEKTPLQVAKGGLGLILKRMVEG</original>
    <variation>DT</variation>
    <location>
        <begin position="150"/>
        <end position="226"/>
    </location>
</feature>
<feature type="mutagenesis site" description="Abolishes interaction with RB1." evidence="1">
    <original>E</original>
    <variation>A</variation>
    <location>
        <position position="182"/>
    </location>
</feature>
<feature type="sequence conflict" description="In Ref. 5; AAV38495." evidence="10" ref="5">
    <original>A</original>
    <variation>T</variation>
    <location>
        <position position="196"/>
    </location>
</feature>
<feature type="strand" evidence="12">
    <location>
        <begin position="6"/>
        <end position="8"/>
    </location>
</feature>
<feature type="helix" evidence="13">
    <location>
        <begin position="9"/>
        <end position="16"/>
    </location>
</feature>
<feature type="helix" evidence="13">
    <location>
        <begin position="19"/>
        <end position="28"/>
    </location>
</feature>
<feature type="helix" evidence="13">
    <location>
        <begin position="30"/>
        <end position="34"/>
    </location>
</feature>
<feature type="turn" evidence="11">
    <location>
        <begin position="38"/>
        <end position="40"/>
    </location>
</feature>
<feature type="helix" evidence="13">
    <location>
        <begin position="43"/>
        <end position="50"/>
    </location>
</feature>
<feature type="helix" evidence="13">
    <location>
        <begin position="53"/>
        <end position="62"/>
    </location>
</feature>
<feature type="strand" evidence="11">
    <location>
        <begin position="71"/>
        <end position="73"/>
    </location>
</feature>
<feature type="helix" evidence="13">
    <location>
        <begin position="76"/>
        <end position="82"/>
    </location>
</feature>
<feature type="helix" evidence="13">
    <location>
        <begin position="86"/>
        <end position="94"/>
    </location>
</feature>
<feature type="helix" evidence="13">
    <location>
        <begin position="109"/>
        <end position="115"/>
    </location>
</feature>
<feature type="helix" evidence="13">
    <location>
        <begin position="119"/>
        <end position="127"/>
    </location>
</feature>
<feature type="helix" evidence="13">
    <location>
        <begin position="142"/>
        <end position="149"/>
    </location>
</feature>
<feature type="helix" evidence="13">
    <location>
        <begin position="152"/>
        <end position="160"/>
    </location>
</feature>
<feature type="helix" evidence="13">
    <location>
        <begin position="175"/>
        <end position="181"/>
    </location>
</feature>
<feature type="helix" evidence="13">
    <location>
        <begin position="185"/>
        <end position="193"/>
    </location>
</feature>
<feature type="helix" evidence="13">
    <location>
        <begin position="208"/>
        <end position="211"/>
    </location>
</feature>
<feature type="helix" evidence="13">
    <location>
        <begin position="216"/>
        <end position="225"/>
    </location>
</feature>
<gene>
    <name type="primary">PSMD10</name>
</gene>
<proteinExistence type="evidence at protein level"/>
<protein>
    <recommendedName>
        <fullName>26S proteasome non-ATPase regulatory subunit 10</fullName>
    </recommendedName>
    <alternativeName>
        <fullName>26S proteasome regulatory subunit p28</fullName>
    </alternativeName>
    <alternativeName>
        <fullName>Gankyrin</fullName>
    </alternativeName>
    <alternativeName>
        <fullName>p28(GANK)</fullName>
    </alternativeName>
</protein>
<dbReference type="EMBL" id="AB009619">
    <property type="protein sequence ID" value="BAA33215.1"/>
    <property type="molecule type" value="mRNA"/>
</dbReference>
<dbReference type="EMBL" id="D83197">
    <property type="protein sequence ID" value="BAA34594.1"/>
    <property type="molecule type" value="mRNA"/>
</dbReference>
<dbReference type="EMBL" id="AY057056">
    <property type="protein sequence ID" value="AAL25260.1"/>
    <property type="molecule type" value="mRNA"/>
</dbReference>
<dbReference type="EMBL" id="AK295996">
    <property type="protein sequence ID" value="BAG58771.1"/>
    <property type="molecule type" value="mRNA"/>
</dbReference>
<dbReference type="EMBL" id="BT019689">
    <property type="protein sequence ID" value="AAV38495.1"/>
    <property type="molecule type" value="mRNA"/>
</dbReference>
<dbReference type="EMBL" id="AL031177">
    <property type="status" value="NOT_ANNOTATED_CDS"/>
    <property type="molecule type" value="Genomic_DNA"/>
</dbReference>
<dbReference type="EMBL" id="BC011960">
    <property type="protein sequence ID" value="AAH11960.1"/>
    <property type="molecule type" value="mRNA"/>
</dbReference>
<dbReference type="CCDS" id="CCDS14536.1">
    <molecule id="O75832-1"/>
</dbReference>
<dbReference type="CCDS" id="CCDS14537.1">
    <molecule id="O75832-2"/>
</dbReference>
<dbReference type="RefSeq" id="NP_002805.1">
    <molecule id="O75832-1"/>
    <property type="nucleotide sequence ID" value="NM_002814.4"/>
</dbReference>
<dbReference type="RefSeq" id="NP_736606.1">
    <molecule id="O75832-2"/>
    <property type="nucleotide sequence ID" value="NM_170750.3"/>
</dbReference>
<dbReference type="PDB" id="1QYM">
    <property type="method" value="X-ray"/>
    <property type="resolution" value="2.80 A"/>
    <property type="chains" value="A=2-226"/>
</dbReference>
<dbReference type="PDB" id="1TR4">
    <property type="method" value="NMR"/>
    <property type="chains" value="A=1-226"/>
</dbReference>
<dbReference type="PDB" id="1UOH">
    <property type="method" value="X-ray"/>
    <property type="resolution" value="2.00 A"/>
    <property type="chains" value="A=1-226"/>
</dbReference>
<dbReference type="PDB" id="4NIK">
    <property type="method" value="X-ray"/>
    <property type="resolution" value="2.50 A"/>
    <property type="chains" value="A=1-226"/>
</dbReference>
<dbReference type="PDB" id="5VHF">
    <property type="method" value="EM"/>
    <property type="resolution" value="5.70 A"/>
    <property type="chains" value="G=4-226"/>
</dbReference>
<dbReference type="PDB" id="5VHH">
    <property type="method" value="EM"/>
    <property type="resolution" value="6.10 A"/>
    <property type="chains" value="G=4-226"/>
</dbReference>
<dbReference type="PDB" id="5VHI">
    <property type="method" value="EM"/>
    <property type="resolution" value="6.80 A"/>
    <property type="chains" value="G=1-226"/>
</dbReference>
<dbReference type="PDB" id="5VHJ">
    <property type="method" value="EM"/>
    <property type="resolution" value="8.50 A"/>
    <property type="chains" value="G=4-226"/>
</dbReference>
<dbReference type="PDB" id="5VHM">
    <property type="method" value="EM"/>
    <property type="resolution" value="8.30 A"/>
    <property type="chains" value="G=4-226"/>
</dbReference>
<dbReference type="PDB" id="5VHN">
    <property type="method" value="EM"/>
    <property type="resolution" value="7.30 A"/>
    <property type="chains" value="G=4-226"/>
</dbReference>
<dbReference type="PDB" id="5VHO">
    <property type="method" value="EM"/>
    <property type="resolution" value="8.30 A"/>
    <property type="chains" value="G=4-226"/>
</dbReference>
<dbReference type="PDB" id="5VHP">
    <property type="method" value="EM"/>
    <property type="resolution" value="7.90 A"/>
    <property type="chains" value="G=3-226"/>
</dbReference>
<dbReference type="PDB" id="5VHQ">
    <property type="method" value="EM"/>
    <property type="resolution" value="8.90 A"/>
    <property type="chains" value="G=4-226"/>
</dbReference>
<dbReference type="PDB" id="5VHR">
    <property type="method" value="EM"/>
    <property type="resolution" value="7.70 A"/>
    <property type="chains" value="G=4-226"/>
</dbReference>
<dbReference type="PDB" id="7VO6">
    <property type="method" value="X-ray"/>
    <property type="resolution" value="1.71 A"/>
    <property type="chains" value="A=1-226"/>
</dbReference>
<dbReference type="PDB" id="7VXV">
    <property type="method" value="X-ray"/>
    <property type="resolution" value="2.23 A"/>
    <property type="chains" value="A=1-226"/>
</dbReference>
<dbReference type="PDB" id="7VXW">
    <property type="method" value="X-ray"/>
    <property type="resolution" value="2.22 A"/>
    <property type="chains" value="A=1-226"/>
</dbReference>
<dbReference type="PDB" id="7VY4">
    <property type="method" value="X-ray"/>
    <property type="resolution" value="2.22 A"/>
    <property type="chains" value="A=1-226"/>
</dbReference>
<dbReference type="PDB" id="7VY7">
    <property type="method" value="X-ray"/>
    <property type="resolution" value="2.23 A"/>
    <property type="chains" value="A=1-226"/>
</dbReference>
<dbReference type="PDBsum" id="1QYM"/>
<dbReference type="PDBsum" id="1TR4"/>
<dbReference type="PDBsum" id="1UOH"/>
<dbReference type="PDBsum" id="4NIK"/>
<dbReference type="PDBsum" id="5VHF"/>
<dbReference type="PDBsum" id="5VHH"/>
<dbReference type="PDBsum" id="5VHI"/>
<dbReference type="PDBsum" id="5VHJ"/>
<dbReference type="PDBsum" id="5VHM"/>
<dbReference type="PDBsum" id="5VHN"/>
<dbReference type="PDBsum" id="5VHO"/>
<dbReference type="PDBsum" id="5VHP"/>
<dbReference type="PDBsum" id="5VHQ"/>
<dbReference type="PDBsum" id="5VHR"/>
<dbReference type="PDBsum" id="7VO6"/>
<dbReference type="PDBsum" id="7VXV"/>
<dbReference type="PDBsum" id="7VXW"/>
<dbReference type="PDBsum" id="7VY4"/>
<dbReference type="PDBsum" id="7VY7"/>
<dbReference type="BMRB" id="O75832"/>
<dbReference type="EMDB" id="EMD-8674"/>
<dbReference type="EMDB" id="EMD-8675"/>
<dbReference type="EMDB" id="EMD-8676"/>
<dbReference type="EMDB" id="EMD-8677"/>
<dbReference type="EMDB" id="EMD-8678"/>
<dbReference type="EMDB" id="EMD-8679"/>
<dbReference type="EMDB" id="EMD-8680"/>
<dbReference type="EMDB" id="EMD-8681"/>
<dbReference type="EMDB" id="EMD-8682"/>
<dbReference type="EMDB" id="EMD-8683"/>
<dbReference type="SMR" id="O75832"/>
<dbReference type="BioGRID" id="111688">
    <property type="interactions" value="196"/>
</dbReference>
<dbReference type="CORUM" id="O75832"/>
<dbReference type="DIP" id="DIP-39026N"/>
<dbReference type="FunCoup" id="O75832">
    <property type="interactions" value="1362"/>
</dbReference>
<dbReference type="IntAct" id="O75832">
    <property type="interactions" value="62"/>
</dbReference>
<dbReference type="MINT" id="O75832"/>
<dbReference type="STRING" id="9606.ENSP00000217958"/>
<dbReference type="BindingDB" id="O75832"/>
<dbReference type="ChEMBL" id="CHEMBL2331054"/>
<dbReference type="GlyGen" id="O75832">
    <property type="glycosylation" value="1 site, 1 O-linked glycan (1 site)"/>
</dbReference>
<dbReference type="iPTMnet" id="O75832"/>
<dbReference type="MetOSite" id="O75832"/>
<dbReference type="PhosphoSitePlus" id="O75832"/>
<dbReference type="SwissPalm" id="O75832"/>
<dbReference type="BioMuta" id="PSMD10"/>
<dbReference type="OGP" id="O75832"/>
<dbReference type="jPOST" id="O75832"/>
<dbReference type="MassIVE" id="O75832"/>
<dbReference type="PaxDb" id="9606-ENSP00000217958"/>
<dbReference type="PeptideAtlas" id="O75832"/>
<dbReference type="ProteomicsDB" id="50220">
    <molecule id="O75832-1"/>
</dbReference>
<dbReference type="ProteomicsDB" id="50221">
    <molecule id="O75832-2"/>
</dbReference>
<dbReference type="Pumba" id="O75832"/>
<dbReference type="TopDownProteomics" id="O75832-1">
    <molecule id="O75832-1"/>
</dbReference>
<dbReference type="ABCD" id="O75832">
    <property type="antibodies" value="1 sequenced antibody"/>
</dbReference>
<dbReference type="Antibodypedia" id="496">
    <property type="antibodies" value="447 antibodies from 33 providers"/>
</dbReference>
<dbReference type="DNASU" id="5716"/>
<dbReference type="Ensembl" id="ENST00000217958.8">
    <molecule id="O75832-1"/>
    <property type="protein sequence ID" value="ENSP00000217958.3"/>
    <property type="gene ID" value="ENSG00000101843.19"/>
</dbReference>
<dbReference type="Ensembl" id="ENST00000361815.9">
    <molecule id="O75832-2"/>
    <property type="protein sequence ID" value="ENSP00000354906.5"/>
    <property type="gene ID" value="ENSG00000101843.19"/>
</dbReference>
<dbReference type="GeneID" id="5716"/>
<dbReference type="KEGG" id="hsa:5716"/>
<dbReference type="MANE-Select" id="ENST00000217958.8">
    <property type="protein sequence ID" value="ENSP00000217958.3"/>
    <property type="RefSeq nucleotide sequence ID" value="NM_002814.4"/>
    <property type="RefSeq protein sequence ID" value="NP_002805.1"/>
</dbReference>
<dbReference type="UCSC" id="uc004enp.3">
    <molecule id="O75832-1"/>
    <property type="organism name" value="human"/>
</dbReference>
<dbReference type="AGR" id="HGNC:9555"/>
<dbReference type="CTD" id="5716"/>
<dbReference type="DisGeNET" id="5716"/>
<dbReference type="GeneCards" id="PSMD10"/>
<dbReference type="HGNC" id="HGNC:9555">
    <property type="gene designation" value="PSMD10"/>
</dbReference>
<dbReference type="HPA" id="ENSG00000101843">
    <property type="expression patterns" value="Low tissue specificity"/>
</dbReference>
<dbReference type="MIM" id="300880">
    <property type="type" value="gene"/>
</dbReference>
<dbReference type="neXtProt" id="NX_O75832"/>
<dbReference type="OpenTargets" id="ENSG00000101843"/>
<dbReference type="PharmGKB" id="PA33900"/>
<dbReference type="VEuPathDB" id="HostDB:ENSG00000101843"/>
<dbReference type="eggNOG" id="KOG4412">
    <property type="taxonomic scope" value="Eukaryota"/>
</dbReference>
<dbReference type="GeneTree" id="ENSGT00940000153404"/>
<dbReference type="HOGENOM" id="CLU_000134_18_2_1"/>
<dbReference type="InParanoid" id="O75832"/>
<dbReference type="OMA" id="WAVAYNR"/>
<dbReference type="OrthoDB" id="1577640at2759"/>
<dbReference type="PAN-GO" id="O75832">
    <property type="GO annotations" value="0 GO annotations based on evolutionary models"/>
</dbReference>
<dbReference type="PhylomeDB" id="O75832"/>
<dbReference type="TreeFam" id="TF106234"/>
<dbReference type="PathwayCommons" id="O75832"/>
<dbReference type="Reactome" id="R-HSA-9907900">
    <property type="pathway name" value="Proteasome assembly"/>
</dbReference>
<dbReference type="SignaLink" id="O75832"/>
<dbReference type="BioGRID-ORCS" id="5716">
    <property type="hits" value="23 hits in 778 CRISPR screens"/>
</dbReference>
<dbReference type="ChiTaRS" id="PSMD10">
    <property type="organism name" value="human"/>
</dbReference>
<dbReference type="EvolutionaryTrace" id="O75832"/>
<dbReference type="GeneWiki" id="PSMD10"/>
<dbReference type="GenomeRNAi" id="5716"/>
<dbReference type="Pharos" id="O75832">
    <property type="development level" value="Tbio"/>
</dbReference>
<dbReference type="PRO" id="PR:O75832"/>
<dbReference type="Proteomes" id="UP000005640">
    <property type="component" value="Chromosome X"/>
</dbReference>
<dbReference type="RNAct" id="O75832">
    <property type="molecule type" value="protein"/>
</dbReference>
<dbReference type="Bgee" id="ENSG00000101843">
    <property type="expression patterns" value="Expressed in epithelium of nasopharynx and 209 other cell types or tissues"/>
</dbReference>
<dbReference type="ExpressionAtlas" id="O75832">
    <property type="expression patterns" value="baseline and differential"/>
</dbReference>
<dbReference type="GO" id="GO:0005929">
    <property type="term" value="C:cilium"/>
    <property type="evidence" value="ECO:0000314"/>
    <property type="project" value="HPA"/>
</dbReference>
<dbReference type="GO" id="GO:0005737">
    <property type="term" value="C:cytoplasm"/>
    <property type="evidence" value="ECO:0000314"/>
    <property type="project" value="UniProtKB"/>
</dbReference>
<dbReference type="GO" id="GO:0005856">
    <property type="term" value="C:cytoskeleton"/>
    <property type="evidence" value="ECO:0000318"/>
    <property type="project" value="GO_Central"/>
</dbReference>
<dbReference type="GO" id="GO:0005829">
    <property type="term" value="C:cytosol"/>
    <property type="evidence" value="ECO:0000314"/>
    <property type="project" value="HPA"/>
</dbReference>
<dbReference type="GO" id="GO:0015630">
    <property type="term" value="C:microtubule cytoskeleton"/>
    <property type="evidence" value="ECO:0000314"/>
    <property type="project" value="HPA"/>
</dbReference>
<dbReference type="GO" id="GO:0005634">
    <property type="term" value="C:nucleus"/>
    <property type="evidence" value="ECO:0000314"/>
    <property type="project" value="UniProtKB"/>
</dbReference>
<dbReference type="GO" id="GO:0000502">
    <property type="term" value="C:proteasome complex"/>
    <property type="evidence" value="ECO:0000314"/>
    <property type="project" value="UniProtKB"/>
</dbReference>
<dbReference type="GO" id="GO:0061629">
    <property type="term" value="F:RNA polymerase II-specific DNA-binding transcription factor binding"/>
    <property type="evidence" value="ECO:0000318"/>
    <property type="project" value="GO_Central"/>
</dbReference>
<dbReference type="GO" id="GO:0008134">
    <property type="term" value="F:transcription factor binding"/>
    <property type="evidence" value="ECO:0000353"/>
    <property type="project" value="UniProtKB"/>
</dbReference>
<dbReference type="GO" id="GO:0006915">
    <property type="term" value="P:apoptotic process"/>
    <property type="evidence" value="ECO:0007669"/>
    <property type="project" value="UniProtKB-KW"/>
</dbReference>
<dbReference type="GO" id="GO:0043066">
    <property type="term" value="P:negative regulation of apoptotic process"/>
    <property type="evidence" value="ECO:0000314"/>
    <property type="project" value="UniProtKB"/>
</dbReference>
<dbReference type="GO" id="GO:0043518">
    <property type="term" value="P:negative regulation of DNA damage response, signal transduction by p53 class mediator"/>
    <property type="evidence" value="ECO:0000314"/>
    <property type="project" value="UniProtKB"/>
</dbReference>
<dbReference type="GO" id="GO:0043409">
    <property type="term" value="P:negative regulation of MAPK cascade"/>
    <property type="evidence" value="ECO:0000315"/>
    <property type="project" value="UniProtKB"/>
</dbReference>
<dbReference type="GO" id="GO:0032088">
    <property type="term" value="P:negative regulation of NF-kappaB transcription factor activity"/>
    <property type="evidence" value="ECO:0000314"/>
    <property type="project" value="UniProtKB"/>
</dbReference>
<dbReference type="GO" id="GO:0090201">
    <property type="term" value="P:negative regulation of release of cytochrome c from mitochondria"/>
    <property type="evidence" value="ECO:0000315"/>
    <property type="project" value="UniProtKB"/>
</dbReference>
<dbReference type="GO" id="GO:0000122">
    <property type="term" value="P:negative regulation of transcription by RNA polymerase II"/>
    <property type="evidence" value="ECO:0000314"/>
    <property type="project" value="UniProtKB"/>
</dbReference>
<dbReference type="GO" id="GO:0030307">
    <property type="term" value="P:positive regulation of cell growth"/>
    <property type="evidence" value="ECO:0000314"/>
    <property type="project" value="UniProtKB"/>
</dbReference>
<dbReference type="GO" id="GO:0045737">
    <property type="term" value="P:positive regulation of cyclin-dependent protein serine/threonine kinase activity"/>
    <property type="evidence" value="ECO:0000314"/>
    <property type="project" value="UniProtKB"/>
</dbReference>
<dbReference type="GO" id="GO:0032436">
    <property type="term" value="P:positive regulation of proteasomal ubiquitin-dependent protein catabolic process"/>
    <property type="evidence" value="ECO:0000314"/>
    <property type="project" value="UniProtKB"/>
</dbReference>
<dbReference type="GO" id="GO:0031398">
    <property type="term" value="P:positive regulation of protein ubiquitination"/>
    <property type="evidence" value="ECO:0000315"/>
    <property type="project" value="UniProtKB"/>
</dbReference>
<dbReference type="GO" id="GO:0070682">
    <property type="term" value="P:proteasome regulatory particle assembly"/>
    <property type="evidence" value="ECO:0000315"/>
    <property type="project" value="UniProtKB"/>
</dbReference>
<dbReference type="GO" id="GO:0006357">
    <property type="term" value="P:regulation of transcription by RNA polymerase II"/>
    <property type="evidence" value="ECO:0000318"/>
    <property type="project" value="GO_Central"/>
</dbReference>
<dbReference type="FunFam" id="1.25.40.20:FF:000149">
    <property type="entry name" value="26S proteasome non-ATPase regulatory subunit 10 isoform X1"/>
    <property type="match status" value="1"/>
</dbReference>
<dbReference type="Gene3D" id="1.25.40.20">
    <property type="entry name" value="Ankyrin repeat-containing domain"/>
    <property type="match status" value="1"/>
</dbReference>
<dbReference type="InterPro" id="IPR051637">
    <property type="entry name" value="Ank_repeat_dom-contain_49"/>
</dbReference>
<dbReference type="InterPro" id="IPR002110">
    <property type="entry name" value="Ankyrin_rpt"/>
</dbReference>
<dbReference type="InterPro" id="IPR036770">
    <property type="entry name" value="Ankyrin_rpt-contain_sf"/>
</dbReference>
<dbReference type="PANTHER" id="PTHR24180">
    <property type="entry name" value="CYCLIN-DEPENDENT KINASE INHIBITOR 2C-RELATED"/>
    <property type="match status" value="1"/>
</dbReference>
<dbReference type="PANTHER" id="PTHR24180:SF39">
    <property type="entry name" value="PROTEASOME 26S SUBUNIT, NON-ATPASE 10"/>
    <property type="match status" value="1"/>
</dbReference>
<dbReference type="Pfam" id="PF00023">
    <property type="entry name" value="Ank"/>
    <property type="match status" value="1"/>
</dbReference>
<dbReference type="Pfam" id="PF12796">
    <property type="entry name" value="Ank_2"/>
    <property type="match status" value="2"/>
</dbReference>
<dbReference type="PRINTS" id="PR01415">
    <property type="entry name" value="ANKYRIN"/>
</dbReference>
<dbReference type="SMART" id="SM00248">
    <property type="entry name" value="ANK"/>
    <property type="match status" value="5"/>
</dbReference>
<dbReference type="SUPFAM" id="SSF48403">
    <property type="entry name" value="Ankyrin repeat"/>
    <property type="match status" value="1"/>
</dbReference>
<dbReference type="PROSITE" id="PS50297">
    <property type="entry name" value="ANK_REP_REGION"/>
    <property type="match status" value="1"/>
</dbReference>
<dbReference type="PROSITE" id="PS50088">
    <property type="entry name" value="ANK_REPEAT"/>
    <property type="match status" value="5"/>
</dbReference>
<comment type="function">
    <text>Acts as a chaperone during the assembly of the 26S proteasome, specifically of the PA700/19S regulatory complex (RC). In the initial step of the base subcomplex assembly is part of an intermediate PSMD10:PSMC4:PSMC5:PAAF1 module which probably assembles with a PSMD5:PSMC2:PSMC1:PSMD2 module. Independently of the proteasome, regulates EGF-induced AKT activation through inhibition of the RHOA/ROCK/PTEN pathway, leading to prolonged AKT activation. Plays an important role in RAS-induced tumorigenesis.</text>
</comment>
<comment type="function">
    <text>Acts as an proto-oncoprotein by being involved in negative regulation of tumor suppressors RB1 and p53/TP53. Overexpression is leading to phosphorylation of RB1 and proteasomal degradation of RB1. Regulates CDK4-mediated phosphorylation of RB1 by competing with CDKN2A for binding with CDK4. Facilitates binding of MDM2 to p53/TP53 and the mono- and polyubiquitination of p53/TP53 by MDM2 suggesting a function in targeting the TP53:MDM2 complex to the 26S proteasome. Involved in p53-independent apoptosis. Involved in regulation of NF-kappa-B by retaining it in the cytoplasm. Binds to the NF-kappa-B component RELA and accelerates its XPO1/CRM1-mediated nuclear export.</text>
</comment>
<comment type="subunit">
    <text evidence="1 2 3 4 5 6 7">Part of transient complex containing PSMD10, PSMC4, PSMC5 and PAAF1 formed during the assembly of the 26S proteasome. Stays associated throughout the assembly of the PA700/19S RC and is released upon association with the 20S core. Interacts with PSMC4. Interacts with RB1. Interacts with CDK4. Interacts with MDM2. Interacts with RELA. Associates with a CDK4:CCND2 serine/threonine kinase complex. Interacts with ARHGDIA and increases the interaction between ARHGDIA and RHOA, hence promotes ARHGDIA inactivation of RHOA and ROCK.</text>
</comment>
<comment type="interaction">
    <interactant intactId="EBI-752185">
        <id>O75832</id>
    </interactant>
    <interactant intactId="EBI-347404">
        <id>O00299</id>
        <label>CLIC1</label>
    </interactant>
    <organismsDiffer>false</organismsDiffer>
    <experiments>9</experiments>
</comment>
<comment type="interaction">
    <interactant intactId="EBI-752185">
        <id>O75832</id>
    </interactant>
    <interactant intactId="EBI-1054150">
        <id>Q12849</id>
        <label>GRSF1</label>
    </interactant>
    <organismsDiffer>false</organismsDiffer>
    <experiments>4</experiments>
</comment>
<comment type="interaction">
    <interactant intactId="EBI-752185">
        <id>O75832</id>
    </interactant>
    <interactant intactId="EBI-745632">
        <id>Q9NWT6</id>
        <label>HIF1AN</label>
    </interactant>
    <organismsDiffer>false</organismsDiffer>
    <experiments>2</experiments>
</comment>
<comment type="interaction">
    <interactant intactId="EBI-752185">
        <id>O75832</id>
    </interactant>
    <interactant intactId="EBI-11052499">
        <id>P0DMV8</id>
        <label>HSPA1A</label>
    </interactant>
    <organismsDiffer>false</organismsDiffer>
    <experiments>2</experiments>
</comment>
<comment type="interaction">
    <interactant intactId="EBI-752185">
        <id>O75832</id>
    </interactant>
    <interactant intactId="EBI-743122">
        <id>P43358</id>
        <label>MAGEA4</label>
    </interactant>
    <organismsDiffer>false</organismsDiffer>
    <experiments>5</experiments>
</comment>
<comment type="interaction">
    <interactant intactId="EBI-752185">
        <id>O75832</id>
    </interactant>
    <interactant intactId="EBI-713635">
        <id>O43639</id>
        <label>NCK2</label>
    </interactant>
    <organismsDiffer>false</organismsDiffer>
    <experiments>2</experiments>
</comment>
<comment type="interaction">
    <interactant intactId="EBI-752185">
        <id>O75832</id>
    </interactant>
    <interactant intactId="EBI-743997">
        <id>P43686</id>
        <label>PSMC4</label>
    </interactant>
    <organismsDiffer>false</organismsDiffer>
    <experiments>26</experiments>
</comment>
<comment type="subcellular location">
    <subcellularLocation>
        <location evidence="5">Cytoplasm</location>
    </subcellularLocation>
    <subcellularLocation>
        <location evidence="5">Nucleus</location>
    </subcellularLocation>
</comment>
<comment type="alternative products">
    <event type="alternative splicing"/>
    <isoform>
        <id>O75832-1</id>
        <name>1</name>
        <sequence type="displayed"/>
    </isoform>
    <isoform>
        <id>O75832-2</id>
        <name>2</name>
        <sequence type="described" ref="VSP_043043"/>
    </isoform>
</comment>
<comment type="tissue specificity">
    <text evidence="1 7">Tends to be up-regulated in cancer cells with RAS mutations, including lung cancers and adenocarconimas (at protein level).</text>
</comment>
<comment type="caution">
    <text evidence="10">Was initially identified as a genuine component of the 26S proteasome.</text>
</comment>
<name>PSD10_HUMAN</name>
<accession>O75832</accession>
<accession>Q5U0B2</accession>
<accession>Q8IZK9</accession>
<sequence>MEGCVSNLMVCNLAYSGKLEELKESILADKSLATRTDQDSRTALHWACSAGHTEIVEFLLQLGVPVNDKDDAGWSPLHIAASAGRDEIVKALLGKGAQVNAVNQNGCTPLHYAASKNRHEIAVMLLEGGANPDAKDHYEATAMHRAAAKGNLKMIHILLYYKASTNIQDTEGNTPLHLACDEERVEEAKLLVSQGASIYIENKEEKTPLQVAKGGLGLILKRMVEG</sequence>
<organism>
    <name type="scientific">Homo sapiens</name>
    <name type="common">Human</name>
    <dbReference type="NCBI Taxonomy" id="9606"/>
    <lineage>
        <taxon>Eukaryota</taxon>
        <taxon>Metazoa</taxon>
        <taxon>Chordata</taxon>
        <taxon>Craniata</taxon>
        <taxon>Vertebrata</taxon>
        <taxon>Euteleostomi</taxon>
        <taxon>Mammalia</taxon>
        <taxon>Eutheria</taxon>
        <taxon>Euarchontoglires</taxon>
        <taxon>Primates</taxon>
        <taxon>Haplorrhini</taxon>
        <taxon>Catarrhini</taxon>
        <taxon>Hominidae</taxon>
        <taxon>Homo</taxon>
    </lineage>
</organism>
<reference key="1">
    <citation type="journal article" date="1998" name="Gene">
        <title>cDNA cloning and functional analysis of p28 (Nas6p) and p40.5 (Nas7p), two novel regulatory subunits of the 26S proteasome.</title>
        <authorList>
            <person name="Hori T."/>
            <person name="Kato S."/>
            <person name="Saeki M."/>
            <person name="DeMartino G.N."/>
            <person name="Slaughter C.A."/>
            <person name="Takeuchi J."/>
            <person name="Toh-e A."/>
            <person name="Tanaka K."/>
        </authorList>
    </citation>
    <scope>NUCLEOTIDE SEQUENCE [MRNA] (ISOFORM 1)</scope>
</reference>
<reference key="2">
    <citation type="submission" date="1996-01" db="EMBL/GenBank/DDBJ databases">
        <title>Enhanced expression of a novel tumour marker in the human hepatomas.</title>
        <authorList>
            <person name="Higashitsuji H."/>
            <person name="Fujita J."/>
        </authorList>
    </citation>
    <scope>NUCLEOTIDE SEQUENCE [MRNA] (ISOFORM 1)</scope>
    <source>
        <tissue>Placenta</tissue>
    </source>
</reference>
<reference key="3">
    <citation type="submission" date="2001-09" db="EMBL/GenBank/DDBJ databases">
        <title>Involvement of p28-II in hepatocellular carcinoma.</title>
        <authorList>
            <person name="Wang H."/>
            <person name="Fu X."/>
            <person name="Wu M."/>
        </authorList>
    </citation>
    <scope>NUCLEOTIDE SEQUENCE [MRNA] (ISOFORM 2)</scope>
    <source>
        <tissue>Liver</tissue>
    </source>
</reference>
<reference key="4">
    <citation type="journal article" date="2004" name="Nat. Genet.">
        <title>Complete sequencing and characterization of 21,243 full-length human cDNAs.</title>
        <authorList>
            <person name="Ota T."/>
            <person name="Suzuki Y."/>
            <person name="Nishikawa T."/>
            <person name="Otsuki T."/>
            <person name="Sugiyama T."/>
            <person name="Irie R."/>
            <person name="Wakamatsu A."/>
            <person name="Hayashi K."/>
            <person name="Sato H."/>
            <person name="Nagai K."/>
            <person name="Kimura K."/>
            <person name="Makita H."/>
            <person name="Sekine M."/>
            <person name="Obayashi M."/>
            <person name="Nishi T."/>
            <person name="Shibahara T."/>
            <person name="Tanaka T."/>
            <person name="Ishii S."/>
            <person name="Yamamoto J."/>
            <person name="Saito K."/>
            <person name="Kawai Y."/>
            <person name="Isono Y."/>
            <person name="Nakamura Y."/>
            <person name="Nagahari K."/>
            <person name="Murakami K."/>
            <person name="Yasuda T."/>
            <person name="Iwayanagi T."/>
            <person name="Wagatsuma M."/>
            <person name="Shiratori A."/>
            <person name="Sudo H."/>
            <person name="Hosoiri T."/>
            <person name="Kaku Y."/>
            <person name="Kodaira H."/>
            <person name="Kondo H."/>
            <person name="Sugawara M."/>
            <person name="Takahashi M."/>
            <person name="Kanda K."/>
            <person name="Yokoi T."/>
            <person name="Furuya T."/>
            <person name="Kikkawa E."/>
            <person name="Omura Y."/>
            <person name="Abe K."/>
            <person name="Kamihara K."/>
            <person name="Katsuta N."/>
            <person name="Sato K."/>
            <person name="Tanikawa M."/>
            <person name="Yamazaki M."/>
            <person name="Ninomiya K."/>
            <person name="Ishibashi T."/>
            <person name="Yamashita H."/>
            <person name="Murakawa K."/>
            <person name="Fujimori K."/>
            <person name="Tanai H."/>
            <person name="Kimata M."/>
            <person name="Watanabe M."/>
            <person name="Hiraoka S."/>
            <person name="Chiba Y."/>
            <person name="Ishida S."/>
            <person name="Ono Y."/>
            <person name="Takiguchi S."/>
            <person name="Watanabe S."/>
            <person name="Yosida M."/>
            <person name="Hotuta T."/>
            <person name="Kusano J."/>
            <person name="Kanehori K."/>
            <person name="Takahashi-Fujii A."/>
            <person name="Hara H."/>
            <person name="Tanase T.-O."/>
            <person name="Nomura Y."/>
            <person name="Togiya S."/>
            <person name="Komai F."/>
            <person name="Hara R."/>
            <person name="Takeuchi K."/>
            <person name="Arita M."/>
            <person name="Imose N."/>
            <person name="Musashino K."/>
            <person name="Yuuki H."/>
            <person name="Oshima A."/>
            <person name="Sasaki N."/>
            <person name="Aotsuka S."/>
            <person name="Yoshikawa Y."/>
            <person name="Matsunawa H."/>
            <person name="Ichihara T."/>
            <person name="Shiohata N."/>
            <person name="Sano S."/>
            <person name="Moriya S."/>
            <person name="Momiyama H."/>
            <person name="Satoh N."/>
            <person name="Takami S."/>
            <person name="Terashima Y."/>
            <person name="Suzuki O."/>
            <person name="Nakagawa S."/>
            <person name="Senoh A."/>
            <person name="Mizoguchi H."/>
            <person name="Goto Y."/>
            <person name="Shimizu F."/>
            <person name="Wakebe H."/>
            <person name="Hishigaki H."/>
            <person name="Watanabe T."/>
            <person name="Sugiyama A."/>
            <person name="Takemoto M."/>
            <person name="Kawakami B."/>
            <person name="Yamazaki M."/>
            <person name="Watanabe K."/>
            <person name="Kumagai A."/>
            <person name="Itakura S."/>
            <person name="Fukuzumi Y."/>
            <person name="Fujimori Y."/>
            <person name="Komiyama M."/>
            <person name="Tashiro H."/>
            <person name="Tanigami A."/>
            <person name="Fujiwara T."/>
            <person name="Ono T."/>
            <person name="Yamada K."/>
            <person name="Fujii Y."/>
            <person name="Ozaki K."/>
            <person name="Hirao M."/>
            <person name="Ohmori Y."/>
            <person name="Kawabata A."/>
            <person name="Hikiji T."/>
            <person name="Kobatake N."/>
            <person name="Inagaki H."/>
            <person name="Ikema Y."/>
            <person name="Okamoto S."/>
            <person name="Okitani R."/>
            <person name="Kawakami T."/>
            <person name="Noguchi S."/>
            <person name="Itoh T."/>
            <person name="Shigeta K."/>
            <person name="Senba T."/>
            <person name="Matsumura K."/>
            <person name="Nakajima Y."/>
            <person name="Mizuno T."/>
            <person name="Morinaga M."/>
            <person name="Sasaki M."/>
            <person name="Togashi T."/>
            <person name="Oyama M."/>
            <person name="Hata H."/>
            <person name="Watanabe M."/>
            <person name="Komatsu T."/>
            <person name="Mizushima-Sugano J."/>
            <person name="Satoh T."/>
            <person name="Shirai Y."/>
            <person name="Takahashi Y."/>
            <person name="Nakagawa K."/>
            <person name="Okumura K."/>
            <person name="Nagase T."/>
            <person name="Nomura N."/>
            <person name="Kikuchi H."/>
            <person name="Masuho Y."/>
            <person name="Yamashita R."/>
            <person name="Nakai K."/>
            <person name="Yada T."/>
            <person name="Nakamura Y."/>
            <person name="Ohara O."/>
            <person name="Isogai T."/>
            <person name="Sugano S."/>
        </authorList>
    </citation>
    <scope>NUCLEOTIDE SEQUENCE [LARGE SCALE MRNA] (ISOFORM 2)</scope>
    <source>
        <tissue>Subthalamic nucleus</tissue>
    </source>
</reference>
<reference key="5">
    <citation type="submission" date="2004-10" db="EMBL/GenBank/DDBJ databases">
        <title>Cloning of human full-length CDSs in BD Creator(TM) system donor vector.</title>
        <authorList>
            <person name="Kalnine N."/>
            <person name="Chen X."/>
            <person name="Rolfs A."/>
            <person name="Halleck A."/>
            <person name="Hines L."/>
            <person name="Eisenstein S."/>
            <person name="Koundinya M."/>
            <person name="Raphael J."/>
            <person name="Moreira D."/>
            <person name="Kelley T."/>
            <person name="LaBaer J."/>
            <person name="Lin Y."/>
            <person name="Phelan M."/>
            <person name="Farmer A."/>
        </authorList>
    </citation>
    <scope>NUCLEOTIDE SEQUENCE [LARGE SCALE MRNA] (ISOFORM 1)</scope>
</reference>
<reference key="6">
    <citation type="journal article" date="2005" name="Nature">
        <title>The DNA sequence of the human X chromosome.</title>
        <authorList>
            <person name="Ross M.T."/>
            <person name="Grafham D.V."/>
            <person name="Coffey A.J."/>
            <person name="Scherer S."/>
            <person name="McLay K."/>
            <person name="Muzny D."/>
            <person name="Platzer M."/>
            <person name="Howell G.R."/>
            <person name="Burrows C."/>
            <person name="Bird C.P."/>
            <person name="Frankish A."/>
            <person name="Lovell F.L."/>
            <person name="Howe K.L."/>
            <person name="Ashurst J.L."/>
            <person name="Fulton R.S."/>
            <person name="Sudbrak R."/>
            <person name="Wen G."/>
            <person name="Jones M.C."/>
            <person name="Hurles M.E."/>
            <person name="Andrews T.D."/>
            <person name="Scott C.E."/>
            <person name="Searle S."/>
            <person name="Ramser J."/>
            <person name="Whittaker A."/>
            <person name="Deadman R."/>
            <person name="Carter N.P."/>
            <person name="Hunt S.E."/>
            <person name="Chen R."/>
            <person name="Cree A."/>
            <person name="Gunaratne P."/>
            <person name="Havlak P."/>
            <person name="Hodgson A."/>
            <person name="Metzker M.L."/>
            <person name="Richards S."/>
            <person name="Scott G."/>
            <person name="Steffen D."/>
            <person name="Sodergren E."/>
            <person name="Wheeler D.A."/>
            <person name="Worley K.C."/>
            <person name="Ainscough R."/>
            <person name="Ambrose K.D."/>
            <person name="Ansari-Lari M.A."/>
            <person name="Aradhya S."/>
            <person name="Ashwell R.I."/>
            <person name="Babbage A.K."/>
            <person name="Bagguley C.L."/>
            <person name="Ballabio A."/>
            <person name="Banerjee R."/>
            <person name="Barker G.E."/>
            <person name="Barlow K.F."/>
            <person name="Barrett I.P."/>
            <person name="Bates K.N."/>
            <person name="Beare D.M."/>
            <person name="Beasley H."/>
            <person name="Beasley O."/>
            <person name="Beck A."/>
            <person name="Bethel G."/>
            <person name="Blechschmidt K."/>
            <person name="Brady N."/>
            <person name="Bray-Allen S."/>
            <person name="Bridgeman A.M."/>
            <person name="Brown A.J."/>
            <person name="Brown M.J."/>
            <person name="Bonnin D."/>
            <person name="Bruford E.A."/>
            <person name="Buhay C."/>
            <person name="Burch P."/>
            <person name="Burford D."/>
            <person name="Burgess J."/>
            <person name="Burrill W."/>
            <person name="Burton J."/>
            <person name="Bye J.M."/>
            <person name="Carder C."/>
            <person name="Carrel L."/>
            <person name="Chako J."/>
            <person name="Chapman J.C."/>
            <person name="Chavez D."/>
            <person name="Chen E."/>
            <person name="Chen G."/>
            <person name="Chen Y."/>
            <person name="Chen Z."/>
            <person name="Chinault C."/>
            <person name="Ciccodicola A."/>
            <person name="Clark S.Y."/>
            <person name="Clarke G."/>
            <person name="Clee C.M."/>
            <person name="Clegg S."/>
            <person name="Clerc-Blankenburg K."/>
            <person name="Clifford K."/>
            <person name="Cobley V."/>
            <person name="Cole C.G."/>
            <person name="Conquer J.S."/>
            <person name="Corby N."/>
            <person name="Connor R.E."/>
            <person name="David R."/>
            <person name="Davies J."/>
            <person name="Davis C."/>
            <person name="Davis J."/>
            <person name="Delgado O."/>
            <person name="Deshazo D."/>
            <person name="Dhami P."/>
            <person name="Ding Y."/>
            <person name="Dinh H."/>
            <person name="Dodsworth S."/>
            <person name="Draper H."/>
            <person name="Dugan-Rocha S."/>
            <person name="Dunham A."/>
            <person name="Dunn M."/>
            <person name="Durbin K.J."/>
            <person name="Dutta I."/>
            <person name="Eades T."/>
            <person name="Ellwood M."/>
            <person name="Emery-Cohen A."/>
            <person name="Errington H."/>
            <person name="Evans K.L."/>
            <person name="Faulkner L."/>
            <person name="Francis F."/>
            <person name="Frankland J."/>
            <person name="Fraser A.E."/>
            <person name="Galgoczy P."/>
            <person name="Gilbert J."/>
            <person name="Gill R."/>
            <person name="Gloeckner G."/>
            <person name="Gregory S.G."/>
            <person name="Gribble S."/>
            <person name="Griffiths C."/>
            <person name="Grocock R."/>
            <person name="Gu Y."/>
            <person name="Gwilliam R."/>
            <person name="Hamilton C."/>
            <person name="Hart E.A."/>
            <person name="Hawes A."/>
            <person name="Heath P.D."/>
            <person name="Heitmann K."/>
            <person name="Hennig S."/>
            <person name="Hernandez J."/>
            <person name="Hinzmann B."/>
            <person name="Ho S."/>
            <person name="Hoffs M."/>
            <person name="Howden P.J."/>
            <person name="Huckle E.J."/>
            <person name="Hume J."/>
            <person name="Hunt P.J."/>
            <person name="Hunt A.R."/>
            <person name="Isherwood J."/>
            <person name="Jacob L."/>
            <person name="Johnson D."/>
            <person name="Jones S."/>
            <person name="de Jong P.J."/>
            <person name="Joseph S.S."/>
            <person name="Keenan S."/>
            <person name="Kelly S."/>
            <person name="Kershaw J.K."/>
            <person name="Khan Z."/>
            <person name="Kioschis P."/>
            <person name="Klages S."/>
            <person name="Knights A.J."/>
            <person name="Kosiura A."/>
            <person name="Kovar-Smith C."/>
            <person name="Laird G.K."/>
            <person name="Langford C."/>
            <person name="Lawlor S."/>
            <person name="Leversha M."/>
            <person name="Lewis L."/>
            <person name="Liu W."/>
            <person name="Lloyd C."/>
            <person name="Lloyd D.M."/>
            <person name="Loulseged H."/>
            <person name="Loveland J.E."/>
            <person name="Lovell J.D."/>
            <person name="Lozado R."/>
            <person name="Lu J."/>
            <person name="Lyne R."/>
            <person name="Ma J."/>
            <person name="Maheshwari M."/>
            <person name="Matthews L.H."/>
            <person name="McDowall J."/>
            <person name="McLaren S."/>
            <person name="McMurray A."/>
            <person name="Meidl P."/>
            <person name="Meitinger T."/>
            <person name="Milne S."/>
            <person name="Miner G."/>
            <person name="Mistry S.L."/>
            <person name="Morgan M."/>
            <person name="Morris S."/>
            <person name="Mueller I."/>
            <person name="Mullikin J.C."/>
            <person name="Nguyen N."/>
            <person name="Nordsiek G."/>
            <person name="Nyakatura G."/>
            <person name="O'dell C.N."/>
            <person name="Okwuonu G."/>
            <person name="Palmer S."/>
            <person name="Pandian R."/>
            <person name="Parker D."/>
            <person name="Parrish J."/>
            <person name="Pasternak S."/>
            <person name="Patel D."/>
            <person name="Pearce A.V."/>
            <person name="Pearson D.M."/>
            <person name="Pelan S.E."/>
            <person name="Perez L."/>
            <person name="Porter K.M."/>
            <person name="Ramsey Y."/>
            <person name="Reichwald K."/>
            <person name="Rhodes S."/>
            <person name="Ridler K.A."/>
            <person name="Schlessinger D."/>
            <person name="Schueler M.G."/>
            <person name="Sehra H.K."/>
            <person name="Shaw-Smith C."/>
            <person name="Shen H."/>
            <person name="Sheridan E.M."/>
            <person name="Shownkeen R."/>
            <person name="Skuce C.D."/>
            <person name="Smith M.L."/>
            <person name="Sotheran E.C."/>
            <person name="Steingruber H.E."/>
            <person name="Steward C.A."/>
            <person name="Storey R."/>
            <person name="Swann R.M."/>
            <person name="Swarbreck D."/>
            <person name="Tabor P.E."/>
            <person name="Taudien S."/>
            <person name="Taylor T."/>
            <person name="Teague B."/>
            <person name="Thomas K."/>
            <person name="Thorpe A."/>
            <person name="Timms K."/>
            <person name="Tracey A."/>
            <person name="Trevanion S."/>
            <person name="Tromans A.C."/>
            <person name="d'Urso M."/>
            <person name="Verduzco D."/>
            <person name="Villasana D."/>
            <person name="Waldron L."/>
            <person name="Wall M."/>
            <person name="Wang Q."/>
            <person name="Warren J."/>
            <person name="Warry G.L."/>
            <person name="Wei X."/>
            <person name="West A."/>
            <person name="Whitehead S.L."/>
            <person name="Whiteley M.N."/>
            <person name="Wilkinson J.E."/>
            <person name="Willey D.L."/>
            <person name="Williams G."/>
            <person name="Williams L."/>
            <person name="Williamson A."/>
            <person name="Williamson H."/>
            <person name="Wilming L."/>
            <person name="Woodmansey R.L."/>
            <person name="Wray P.W."/>
            <person name="Yen J."/>
            <person name="Zhang J."/>
            <person name="Zhou J."/>
            <person name="Zoghbi H."/>
            <person name="Zorilla S."/>
            <person name="Buck D."/>
            <person name="Reinhardt R."/>
            <person name="Poustka A."/>
            <person name="Rosenthal A."/>
            <person name="Lehrach H."/>
            <person name="Meindl A."/>
            <person name="Minx P.J."/>
            <person name="Hillier L.W."/>
            <person name="Willard H.F."/>
            <person name="Wilson R.K."/>
            <person name="Waterston R.H."/>
            <person name="Rice C.M."/>
            <person name="Vaudin M."/>
            <person name="Coulson A."/>
            <person name="Nelson D.L."/>
            <person name="Weinstock G."/>
            <person name="Sulston J.E."/>
            <person name="Durbin R.M."/>
            <person name="Hubbard T."/>
            <person name="Gibbs R.A."/>
            <person name="Beck S."/>
            <person name="Rogers J."/>
            <person name="Bentley D.R."/>
        </authorList>
    </citation>
    <scope>NUCLEOTIDE SEQUENCE [LARGE SCALE GENOMIC DNA]</scope>
</reference>
<reference key="7">
    <citation type="journal article" date="2004" name="Genome Res.">
        <title>The status, quality, and expansion of the NIH full-length cDNA project: the Mammalian Gene Collection (MGC).</title>
        <authorList>
            <consortium name="The MGC Project Team"/>
        </authorList>
    </citation>
    <scope>NUCLEOTIDE SEQUENCE [LARGE SCALE MRNA] (ISOFORM 1)</scope>
    <source>
        <tissue>Lung</tissue>
    </source>
</reference>
<reference key="8">
    <citation type="journal article" date="2000" name="Nat. Med.">
        <title>Reduced stability of retinoblastoma protein by gankyrin, an oncogenic ankyrin-repeat protein overexpressed in hepatomas.</title>
        <authorList>
            <person name="Higashitsuji H."/>
            <person name="Itoh K."/>
            <person name="Nagao T."/>
            <person name="Dawson S."/>
            <person name="Nonoguchi K."/>
            <person name="Kido T."/>
            <person name="Mayer R.J."/>
            <person name="Arii S."/>
            <person name="Fujita J."/>
        </authorList>
    </citation>
    <scope>FUNCTION AS POTENTIAL PROTO-ONCOGENE</scope>
    <scope>INTERACTION WITH RB1</scope>
    <scope>TISSUE SPECIFICITY</scope>
    <scope>MUTAGENESIS OF GLU-182</scope>
</reference>
<reference key="9">
    <citation type="journal article" date="2002" name="Biochemistry">
        <title>Novel insights into the INK4-CDK4/6-Rb pathway: counter action of gankyrin against INK4 proteins regulates the CDK4-mediated phosphorylation of Rb.</title>
        <authorList>
            <person name="Li J."/>
            <person name="Tsai M.D."/>
        </authorList>
    </citation>
    <scope>FUNCTION</scope>
    <scope>INTERACTION WITH CDK4</scope>
</reference>
<reference key="10">
    <citation type="journal article" date="2002" name="J. Biol. Chem.">
        <title>Gankyrin is an ankyrin-repeat oncoprotein that interacts with CDK4 kinase and the S6 ATPase of the 26 S proteasome.</title>
        <authorList>
            <person name="Dawson S."/>
            <person name="Apcher S."/>
            <person name="Mee M."/>
            <person name="Higashitsuji H."/>
            <person name="Baker R."/>
            <person name="Uhle S."/>
            <person name="Dubiel W."/>
            <person name="Fujita J."/>
            <person name="Mayer R.J."/>
        </authorList>
    </citation>
    <scope>FUNCTION</scope>
    <scope>INTERACTION WITH PSMC4</scope>
</reference>
<reference key="11">
    <citation type="journal article" date="2005" name="Cancer Cell">
        <title>The oncoprotein gankyrin binds to MDM2/HDM2, enhancing ubiquitylation and degradation of p53.</title>
        <authorList>
            <person name="Higashitsuji H."/>
            <person name="Higashitsuji H."/>
            <person name="Itoh K."/>
            <person name="Sakurai T."/>
            <person name="Nagao T."/>
            <person name="Sumitomo Y."/>
            <person name="Masuda T."/>
            <person name="Dawson S."/>
            <person name="Shimada Y."/>
            <person name="Mayer R.J."/>
            <person name="Fujita J."/>
        </authorList>
    </citation>
    <scope>FUNCTION IN DEGRADATION OF TP53</scope>
    <scope>INTERACTION WITH MDM2</scope>
</reference>
<reference key="12">
    <citation type="journal article" date="2007" name="Biochemistry">
        <title>Mass spectrometric characterization of the affinity-purified human 26S proteasome complex.</title>
        <authorList>
            <person name="Wang X."/>
            <person name="Chen C.-F."/>
            <person name="Baker P.R."/>
            <person name="Chen P.-L."/>
            <person name="Kaiser P."/>
            <person name="Huang L."/>
        </authorList>
    </citation>
    <scope>IDENTIFICATION BY MASS SPECTROMETRY [LARGE SCALE ANALYSIS]</scope>
    <source>
        <tissue>Embryonic kidney</tissue>
    </source>
</reference>
<reference key="13">
    <citation type="journal article" date="2007" name="Cell Res.">
        <title>Oncoprotein p28 GANK binds to RelA and retains NF-kappaB in the cytoplasm through nuclear export.</title>
        <authorList>
            <person name="Chen Y."/>
            <person name="Li H.H."/>
            <person name="Fu J."/>
            <person name="Wang X.F."/>
            <person name="Ren Y.B."/>
            <person name="Dong L.W."/>
            <person name="Tang S.H."/>
            <person name="Liu S.Q."/>
            <person name="Wu M.C."/>
            <person name="Wang H.Y."/>
        </authorList>
    </citation>
    <scope>FUNCTION IN REGULATION OF NF-KAPPA-B</scope>
    <scope>INTERACTION WITH RELY</scope>
    <scope>SUBCELLULAR LOCATION</scope>
</reference>
<reference key="14">
    <citation type="journal article" date="2009" name="Cell">
        <title>Assembly pathway of the Mammalian proteasome base subcomplex is mediated by multiple specific chaperones.</title>
        <authorList>
            <person name="Kaneko T."/>
            <person name="Hamazaki J."/>
            <person name="Iemura S."/>
            <person name="Sasaki K."/>
            <person name="Furuyama K."/>
            <person name="Natsume T."/>
            <person name="Tanaka K."/>
            <person name="Murata S."/>
        </authorList>
    </citation>
    <scope>FUNCTION AS PROTEASOME CHAPERONE</scope>
    <scope>SUBUNIT</scope>
</reference>
<reference key="15">
    <citation type="journal article" date="2009" name="Cytogenet. Genome Res.">
        <title>Involvement of the mitochondrial pathway in p53-independent apoptosis induced by p28GANK knockdown in Hep3B cells.</title>
        <authorList>
            <person name="Wang J."/>
            <person name="Wang X.F."/>
            <person name="Zhang L.G."/>
            <person name="Xie S.Y."/>
            <person name="Li Z.L."/>
            <person name="Li Y.J."/>
            <person name="Li H.H."/>
            <person name="Jiao F."/>
        </authorList>
    </citation>
    <scope>FUNCTION IN APOPTOSIS</scope>
</reference>
<reference key="16">
    <citation type="journal article" date="2010" name="J. Clin. Invest.">
        <title>Gankyrin plays an essential role in Ras-induced tumorigenesis through regulation of the RhoA/ROCK pathway in mammalian cells.</title>
        <authorList>
            <person name="Man J.H."/>
            <person name="Liang B."/>
            <person name="Gu Y.X."/>
            <person name="Zhou T."/>
            <person name="Li A.L."/>
            <person name="Li T."/>
            <person name="Jin B.F."/>
            <person name="Bai B."/>
            <person name="Zhang H.Y."/>
            <person name="Zhang W.N."/>
            <person name="Li W.H."/>
            <person name="Gong W.L."/>
            <person name="Li H.Y."/>
            <person name="Zhang X.M."/>
        </authorList>
    </citation>
    <scope>FUNCTION IN AKT ACTIVATION</scope>
    <scope>INTERACTION WITH ARHGDIA</scope>
    <scope>TISSUE SPECIFICITY</scope>
</reference>
<reference key="17">
    <citation type="journal article" date="2011" name="BMC Syst. Biol.">
        <title>Initial characterization of the human central proteome.</title>
        <authorList>
            <person name="Burkard T.R."/>
            <person name="Planyavsky M."/>
            <person name="Kaupe I."/>
            <person name="Breitwieser F.P."/>
            <person name="Buerckstuemmer T."/>
            <person name="Bennett K.L."/>
            <person name="Superti-Furga G."/>
            <person name="Colinge J."/>
        </authorList>
    </citation>
    <scope>IDENTIFICATION BY MASS SPECTROMETRY [LARGE SCALE ANALYSIS]</scope>
</reference>
<reference key="18">
    <citation type="journal article" date="2004" name="Biochemistry">
        <title>Solution structure of the human oncogenic protein gankyrin containing seven ankyrin repeats and analysis of its structure-function relationship.</title>
        <authorList>
            <person name="Yuan C."/>
            <person name="Li J."/>
            <person name="Mahajan A."/>
            <person name="Poi M.J."/>
            <person name="Byeon I.-J."/>
            <person name="Tsai M.-D."/>
        </authorList>
    </citation>
    <scope>STRUCTURE BY NMR</scope>
    <scope>DOMAINS ANK REPEATS</scope>
</reference>
<reference key="19">
    <citation type="journal article" date="2004" name="J. Biol. Chem.">
        <title>The crystal structure of gankyrin, an oncoprotein found in complexes with cyclin-dependent kinase 4, a 19 S proteasomal ATPase regulator, and the tumor suppressors Rb and p53.</title>
        <authorList>
            <person name="Krzywda S."/>
            <person name="Brzozowski A.M."/>
            <person name="Higashitsuji H."/>
            <person name="Fujita J."/>
            <person name="Welchman R."/>
            <person name="Dawson S."/>
            <person name="Mayer R.J."/>
            <person name="Wilkinson A.J."/>
        </authorList>
    </citation>
    <scope>X-RAY CRYSTALLOGRAPHY (2.0 ANGSTROMS)</scope>
    <scope>DOMAIN ANK REPEATS</scope>
</reference>
<reference key="20">
    <citation type="journal article" date="2004" name="Proteins">
        <title>X-ray structure of human gankyrin, the product of a gene linked to hepatocellular carcinoma.</title>
        <authorList>
            <person name="Manjasetty B.A."/>
            <person name="Quedenau C."/>
            <person name="Sievert V."/>
            <person name="Bussow K."/>
            <person name="Niesen F."/>
            <person name="Delbruck H."/>
            <person name="Heinemann U."/>
        </authorList>
    </citation>
    <scope>X-RAY CRYSTALLOGRAPHY (2.8 ANGSTROMS) OF 2-226</scope>
</reference>
<keyword id="KW-0002">3D-structure</keyword>
<keyword id="KW-0025">Alternative splicing</keyword>
<keyword id="KW-0040">ANK repeat</keyword>
<keyword id="KW-0053">Apoptosis</keyword>
<keyword id="KW-0143">Chaperone</keyword>
<keyword id="KW-0963">Cytoplasm</keyword>
<keyword id="KW-0539">Nucleus</keyword>
<keyword id="KW-1267">Proteomics identification</keyword>
<keyword id="KW-1185">Reference proteome</keyword>
<keyword id="KW-0677">Repeat</keyword>